<reference key="1">
    <citation type="submission" date="2007-11" db="EMBL/GenBank/DDBJ databases">
        <title>Complete sequence of chromosome of Shewanella baltica OS195.</title>
        <authorList>
            <consortium name="US DOE Joint Genome Institute"/>
            <person name="Copeland A."/>
            <person name="Lucas S."/>
            <person name="Lapidus A."/>
            <person name="Barry K."/>
            <person name="Glavina del Rio T."/>
            <person name="Dalin E."/>
            <person name="Tice H."/>
            <person name="Pitluck S."/>
            <person name="Chain P."/>
            <person name="Malfatti S."/>
            <person name="Shin M."/>
            <person name="Vergez L."/>
            <person name="Schmutz J."/>
            <person name="Larimer F."/>
            <person name="Land M."/>
            <person name="Hauser L."/>
            <person name="Kyrpides N."/>
            <person name="Kim E."/>
            <person name="Brettar I."/>
            <person name="Rodrigues J."/>
            <person name="Konstantinidis K."/>
            <person name="Klappenbach J."/>
            <person name="Hofle M."/>
            <person name="Tiedje J."/>
            <person name="Richardson P."/>
        </authorList>
    </citation>
    <scope>NUCLEOTIDE SEQUENCE [LARGE SCALE GENOMIC DNA]</scope>
    <source>
        <strain>OS195</strain>
    </source>
</reference>
<feature type="chain" id="PRO_0000346012" description="Protoheme IX farnesyltransferase 1">
    <location>
        <begin position="1"/>
        <end position="301"/>
    </location>
</feature>
<feature type="transmembrane region" description="Helical" evidence="1">
    <location>
        <begin position="29"/>
        <end position="49"/>
    </location>
</feature>
<feature type="transmembrane region" description="Helical" evidence="1">
    <location>
        <begin position="51"/>
        <end position="71"/>
    </location>
</feature>
<feature type="transmembrane region" description="Helical" evidence="1">
    <location>
        <begin position="101"/>
        <end position="121"/>
    </location>
</feature>
<feature type="transmembrane region" description="Helical" evidence="1">
    <location>
        <begin position="123"/>
        <end position="143"/>
    </location>
</feature>
<feature type="transmembrane region" description="Helical" evidence="1">
    <location>
        <begin position="150"/>
        <end position="170"/>
    </location>
</feature>
<feature type="transmembrane region" description="Helical" evidence="1">
    <location>
        <begin position="177"/>
        <end position="197"/>
    </location>
</feature>
<feature type="transmembrane region" description="Helical" evidence="1">
    <location>
        <begin position="223"/>
        <end position="243"/>
    </location>
</feature>
<feature type="transmembrane region" description="Helical" evidence="1">
    <location>
        <begin position="244"/>
        <end position="264"/>
    </location>
</feature>
<feature type="transmembrane region" description="Helical" evidence="1">
    <location>
        <begin position="274"/>
        <end position="294"/>
    </location>
</feature>
<proteinExistence type="inferred from homology"/>
<name>CYOE1_SHEB9</name>
<protein>
    <recommendedName>
        <fullName evidence="1">Protoheme IX farnesyltransferase 1</fullName>
        <ecNumber evidence="1">2.5.1.141</ecNumber>
    </recommendedName>
    <alternativeName>
        <fullName evidence="1">Heme B farnesyltransferase 1</fullName>
    </alternativeName>
    <alternativeName>
        <fullName evidence="1">Heme O synthase 1</fullName>
    </alternativeName>
</protein>
<comment type="function">
    <text evidence="1">Converts heme B (protoheme IX) to heme O by substitution of the vinyl group on carbon 2 of heme B porphyrin ring with a hydroxyethyl farnesyl side group.</text>
</comment>
<comment type="catalytic activity">
    <reaction evidence="1">
        <text>heme b + (2E,6E)-farnesyl diphosphate + H2O = Fe(II)-heme o + diphosphate</text>
        <dbReference type="Rhea" id="RHEA:28070"/>
        <dbReference type="ChEBI" id="CHEBI:15377"/>
        <dbReference type="ChEBI" id="CHEBI:33019"/>
        <dbReference type="ChEBI" id="CHEBI:60344"/>
        <dbReference type="ChEBI" id="CHEBI:60530"/>
        <dbReference type="ChEBI" id="CHEBI:175763"/>
        <dbReference type="EC" id="2.5.1.141"/>
    </reaction>
</comment>
<comment type="pathway">
    <text evidence="1">Porphyrin-containing compound metabolism; heme O biosynthesis; heme O from protoheme: step 1/1.</text>
</comment>
<comment type="subcellular location">
    <subcellularLocation>
        <location evidence="1">Cell inner membrane</location>
        <topology evidence="1">Multi-pass membrane protein</topology>
    </subcellularLocation>
</comment>
<comment type="miscellaneous">
    <text evidence="1">Carbon 2 of the heme B porphyrin ring is defined according to the Fischer nomenclature.</text>
</comment>
<comment type="similarity">
    <text evidence="1">Belongs to the UbiA prenyltransferase family. Protoheme IX farnesyltransferase subfamily.</text>
</comment>
<dbReference type="EC" id="2.5.1.141" evidence="1"/>
<dbReference type="EMBL" id="CP000891">
    <property type="protein sequence ID" value="ABX51477.1"/>
    <property type="molecule type" value="Genomic_DNA"/>
</dbReference>
<dbReference type="SMR" id="A9KUX8"/>
<dbReference type="KEGG" id="sbn:Sbal195_4319"/>
<dbReference type="HOGENOM" id="CLU_029631_0_2_6"/>
<dbReference type="UniPathway" id="UPA00834">
    <property type="reaction ID" value="UER00712"/>
</dbReference>
<dbReference type="Proteomes" id="UP000000770">
    <property type="component" value="Chromosome"/>
</dbReference>
<dbReference type="GO" id="GO:0005886">
    <property type="term" value="C:plasma membrane"/>
    <property type="evidence" value="ECO:0007669"/>
    <property type="project" value="UniProtKB-SubCell"/>
</dbReference>
<dbReference type="GO" id="GO:0008495">
    <property type="term" value="F:protoheme IX farnesyltransferase activity"/>
    <property type="evidence" value="ECO:0007669"/>
    <property type="project" value="UniProtKB-UniRule"/>
</dbReference>
<dbReference type="GO" id="GO:0048034">
    <property type="term" value="P:heme O biosynthetic process"/>
    <property type="evidence" value="ECO:0007669"/>
    <property type="project" value="UniProtKB-UniRule"/>
</dbReference>
<dbReference type="CDD" id="cd13957">
    <property type="entry name" value="PT_UbiA_Cox10"/>
    <property type="match status" value="1"/>
</dbReference>
<dbReference type="FunFam" id="1.10.357.140:FF:000001">
    <property type="entry name" value="Protoheme IX farnesyltransferase"/>
    <property type="match status" value="1"/>
</dbReference>
<dbReference type="Gene3D" id="1.10.357.140">
    <property type="entry name" value="UbiA prenyltransferase"/>
    <property type="match status" value="1"/>
</dbReference>
<dbReference type="HAMAP" id="MF_00154">
    <property type="entry name" value="CyoE_CtaB"/>
    <property type="match status" value="1"/>
</dbReference>
<dbReference type="InterPro" id="IPR006369">
    <property type="entry name" value="Protohaem_IX_farnesylTrfase"/>
</dbReference>
<dbReference type="InterPro" id="IPR000537">
    <property type="entry name" value="UbiA_prenyltransferase"/>
</dbReference>
<dbReference type="InterPro" id="IPR030470">
    <property type="entry name" value="UbiA_prenylTrfase_CS"/>
</dbReference>
<dbReference type="InterPro" id="IPR044878">
    <property type="entry name" value="UbiA_sf"/>
</dbReference>
<dbReference type="NCBIfam" id="TIGR01473">
    <property type="entry name" value="cyoE_ctaB"/>
    <property type="match status" value="1"/>
</dbReference>
<dbReference type="NCBIfam" id="NF003349">
    <property type="entry name" value="PRK04375.1-2"/>
    <property type="match status" value="1"/>
</dbReference>
<dbReference type="PANTHER" id="PTHR43448:SF7">
    <property type="entry name" value="4-HYDROXYBENZOATE SOLANESYLTRANSFERASE"/>
    <property type="match status" value="1"/>
</dbReference>
<dbReference type="PANTHER" id="PTHR43448">
    <property type="entry name" value="PROTOHEME IX FARNESYLTRANSFERASE, MITOCHONDRIAL"/>
    <property type="match status" value="1"/>
</dbReference>
<dbReference type="Pfam" id="PF01040">
    <property type="entry name" value="UbiA"/>
    <property type="match status" value="1"/>
</dbReference>
<dbReference type="PROSITE" id="PS00943">
    <property type="entry name" value="UBIA"/>
    <property type="match status" value="1"/>
</dbReference>
<sequence>MAKPLSITSSLPTFSVTWRAYFEMTKPKVVALMLLTVLVGMCLAVPHAVPVQPLLAGMLGIAMMAGSAAALNHLIDRRIDGLMARTYNRPLPKGRISATRALIFAASLGSLGFIVLYSLVNPLTAWLTFASLIGYALVYTAYLKRATSQNIVIGGLAGAMPPLLGWTAVTNEFHGHALLLVIIIFTWTPPHFWALAIHRRAEYAKVDIPMLPVTHGVEFTKTCILLYTVLLAIACLLPVLVGMCGPVYFVCSSLLSTGFIYKAWQLKYRDHDGLAMQVFRFSIYHLMLLFMALLLDHYLWN</sequence>
<keyword id="KW-0997">Cell inner membrane</keyword>
<keyword id="KW-1003">Cell membrane</keyword>
<keyword id="KW-0350">Heme biosynthesis</keyword>
<keyword id="KW-0472">Membrane</keyword>
<keyword id="KW-0808">Transferase</keyword>
<keyword id="KW-0812">Transmembrane</keyword>
<keyword id="KW-1133">Transmembrane helix</keyword>
<evidence type="ECO:0000255" key="1">
    <source>
        <dbReference type="HAMAP-Rule" id="MF_00154"/>
    </source>
</evidence>
<accession>A9KUX8</accession>
<organism>
    <name type="scientific">Shewanella baltica (strain OS195)</name>
    <dbReference type="NCBI Taxonomy" id="399599"/>
    <lineage>
        <taxon>Bacteria</taxon>
        <taxon>Pseudomonadati</taxon>
        <taxon>Pseudomonadota</taxon>
        <taxon>Gammaproteobacteria</taxon>
        <taxon>Alteromonadales</taxon>
        <taxon>Shewanellaceae</taxon>
        <taxon>Shewanella</taxon>
    </lineage>
</organism>
<gene>
    <name evidence="1" type="primary">cyoE1</name>
    <name type="ordered locus">Sbal195_4319</name>
</gene>